<evidence type="ECO:0000255" key="1">
    <source>
        <dbReference type="HAMAP-Rule" id="MF_01080"/>
    </source>
</evidence>
<protein>
    <recommendedName>
        <fullName evidence="1">tRNA pseudouridine synthase B</fullName>
        <ecNumber evidence="1">5.4.99.25</ecNumber>
    </recommendedName>
    <alternativeName>
        <fullName evidence="1">tRNA pseudouridine(55) synthase</fullName>
        <shortName evidence="1">Psi55 synthase</shortName>
    </alternativeName>
    <alternativeName>
        <fullName evidence="1">tRNA pseudouridylate synthase</fullName>
    </alternativeName>
    <alternativeName>
        <fullName evidence="1">tRNA-uridine isomerase</fullName>
    </alternativeName>
</protein>
<organism>
    <name type="scientific">Heliobacterium modesticaldum (strain ATCC 51547 / Ice1)</name>
    <dbReference type="NCBI Taxonomy" id="498761"/>
    <lineage>
        <taxon>Bacteria</taxon>
        <taxon>Bacillati</taxon>
        <taxon>Bacillota</taxon>
        <taxon>Clostridia</taxon>
        <taxon>Eubacteriales</taxon>
        <taxon>Heliobacteriaceae</taxon>
        <taxon>Heliomicrobium</taxon>
    </lineage>
</organism>
<proteinExistence type="inferred from homology"/>
<comment type="function">
    <text evidence="1">Responsible for synthesis of pseudouridine from uracil-55 in the psi GC loop of transfer RNAs.</text>
</comment>
<comment type="catalytic activity">
    <reaction evidence="1">
        <text>uridine(55) in tRNA = pseudouridine(55) in tRNA</text>
        <dbReference type="Rhea" id="RHEA:42532"/>
        <dbReference type="Rhea" id="RHEA-COMP:10101"/>
        <dbReference type="Rhea" id="RHEA-COMP:10102"/>
        <dbReference type="ChEBI" id="CHEBI:65314"/>
        <dbReference type="ChEBI" id="CHEBI:65315"/>
        <dbReference type="EC" id="5.4.99.25"/>
    </reaction>
</comment>
<comment type="similarity">
    <text evidence="1">Belongs to the pseudouridine synthase TruB family. Type 1 subfamily.</text>
</comment>
<gene>
    <name evidence="1" type="primary">truB</name>
    <name type="ordered locus">Helmi_22250</name>
    <name type="ORF">HM1_2317</name>
</gene>
<accession>B0THR7</accession>
<dbReference type="EC" id="5.4.99.25" evidence="1"/>
<dbReference type="EMBL" id="CP000930">
    <property type="protein sequence ID" value="ABZ84850.1"/>
    <property type="molecule type" value="Genomic_DNA"/>
</dbReference>
<dbReference type="RefSeq" id="WP_012283348.1">
    <property type="nucleotide sequence ID" value="NC_010337.2"/>
</dbReference>
<dbReference type="SMR" id="B0THR7"/>
<dbReference type="STRING" id="498761.HM1_2317"/>
<dbReference type="KEGG" id="hmo:HM1_2317"/>
<dbReference type="eggNOG" id="COG0130">
    <property type="taxonomic scope" value="Bacteria"/>
</dbReference>
<dbReference type="HOGENOM" id="CLU_032087_0_0_9"/>
<dbReference type="OrthoDB" id="9802309at2"/>
<dbReference type="Proteomes" id="UP000008550">
    <property type="component" value="Chromosome"/>
</dbReference>
<dbReference type="GO" id="GO:0003723">
    <property type="term" value="F:RNA binding"/>
    <property type="evidence" value="ECO:0007669"/>
    <property type="project" value="InterPro"/>
</dbReference>
<dbReference type="GO" id="GO:0160148">
    <property type="term" value="F:tRNA pseudouridine(55) synthase activity"/>
    <property type="evidence" value="ECO:0007669"/>
    <property type="project" value="UniProtKB-EC"/>
</dbReference>
<dbReference type="GO" id="GO:1990481">
    <property type="term" value="P:mRNA pseudouridine synthesis"/>
    <property type="evidence" value="ECO:0007669"/>
    <property type="project" value="TreeGrafter"/>
</dbReference>
<dbReference type="GO" id="GO:0031119">
    <property type="term" value="P:tRNA pseudouridine synthesis"/>
    <property type="evidence" value="ECO:0007669"/>
    <property type="project" value="UniProtKB-UniRule"/>
</dbReference>
<dbReference type="CDD" id="cd02573">
    <property type="entry name" value="PseudoU_synth_EcTruB"/>
    <property type="match status" value="1"/>
</dbReference>
<dbReference type="FunFam" id="3.30.2350.10:FF:000011">
    <property type="entry name" value="tRNA pseudouridine synthase B"/>
    <property type="match status" value="1"/>
</dbReference>
<dbReference type="Gene3D" id="3.30.2350.10">
    <property type="entry name" value="Pseudouridine synthase"/>
    <property type="match status" value="1"/>
</dbReference>
<dbReference type="HAMAP" id="MF_01080">
    <property type="entry name" value="TruB_bact"/>
    <property type="match status" value="1"/>
</dbReference>
<dbReference type="InterPro" id="IPR020103">
    <property type="entry name" value="PsdUridine_synth_cat_dom_sf"/>
</dbReference>
<dbReference type="InterPro" id="IPR002501">
    <property type="entry name" value="PsdUridine_synth_N"/>
</dbReference>
<dbReference type="InterPro" id="IPR014780">
    <property type="entry name" value="tRNA_psdUridine_synth_TruB"/>
</dbReference>
<dbReference type="InterPro" id="IPR032819">
    <property type="entry name" value="TruB_C"/>
</dbReference>
<dbReference type="NCBIfam" id="TIGR00431">
    <property type="entry name" value="TruB"/>
    <property type="match status" value="1"/>
</dbReference>
<dbReference type="PANTHER" id="PTHR13767:SF2">
    <property type="entry name" value="PSEUDOURIDYLATE SYNTHASE TRUB1"/>
    <property type="match status" value="1"/>
</dbReference>
<dbReference type="PANTHER" id="PTHR13767">
    <property type="entry name" value="TRNA-PSEUDOURIDINE SYNTHASE"/>
    <property type="match status" value="1"/>
</dbReference>
<dbReference type="Pfam" id="PF16198">
    <property type="entry name" value="TruB_C_2"/>
    <property type="match status" value="1"/>
</dbReference>
<dbReference type="Pfam" id="PF01509">
    <property type="entry name" value="TruB_N"/>
    <property type="match status" value="1"/>
</dbReference>
<dbReference type="SUPFAM" id="SSF55120">
    <property type="entry name" value="Pseudouridine synthase"/>
    <property type="match status" value="1"/>
</dbReference>
<sequence length="306" mass="33906">MEPLELEGFLNLLKPPGMTSHDVVAKARRLLKEKRIGHLGTLDPDAAGVLPIAIGQATRLIELVAGVDKAYRTQLRLGAVTDSQDASGRIVKTGAVPALSRDDWEETLRPFRGQILQTPPMVSAVSVGGKRLYEYARQGIEVERSARPVSISRIEIVHYDPATPEEIVIDVECSAGTYIRTLCHDIGQRLGCGGHMGWLIRTRSGLFSLRDSLTLESLAEGPPKEQIVTPFEALAHLPALEIGENRLAALSRGLAQYLQGDGWSEGQWIRMHRRQKLLAVGQAIRKDEQWLCQPRKVFTRLETRSK</sequence>
<feature type="chain" id="PRO_1000213505" description="tRNA pseudouridine synthase B">
    <location>
        <begin position="1"/>
        <end position="306"/>
    </location>
</feature>
<feature type="active site" description="Nucleophile" evidence="1">
    <location>
        <position position="43"/>
    </location>
</feature>
<reference key="1">
    <citation type="journal article" date="2008" name="J. Bacteriol.">
        <title>The genome of Heliobacterium modesticaldum, a phototrophic representative of the Firmicutes containing the simplest photosynthetic apparatus.</title>
        <authorList>
            <person name="Sattley W.M."/>
            <person name="Madigan M.T."/>
            <person name="Swingley W.D."/>
            <person name="Cheung P.C."/>
            <person name="Clocksin K.M."/>
            <person name="Conrad A.L."/>
            <person name="Dejesa L.C."/>
            <person name="Honchak B.M."/>
            <person name="Jung D.O."/>
            <person name="Karbach L.E."/>
            <person name="Kurdoglu A."/>
            <person name="Lahiri S."/>
            <person name="Mastrian S.D."/>
            <person name="Page L.E."/>
            <person name="Taylor H.L."/>
            <person name="Wang Z.T."/>
            <person name="Raymond J."/>
            <person name="Chen M."/>
            <person name="Blankenship R.E."/>
            <person name="Touchman J.W."/>
        </authorList>
    </citation>
    <scope>NUCLEOTIDE SEQUENCE [LARGE SCALE GENOMIC DNA]</scope>
    <source>
        <strain>ATCC 51547 / Ice1</strain>
    </source>
</reference>
<keyword id="KW-0413">Isomerase</keyword>
<keyword id="KW-1185">Reference proteome</keyword>
<keyword id="KW-0819">tRNA processing</keyword>
<name>TRUB_HELMI</name>